<proteinExistence type="inferred from homology"/>
<dbReference type="EMBL" id="BX908798">
    <property type="protein sequence ID" value="CAF23140.1"/>
    <property type="molecule type" value="Genomic_DNA"/>
</dbReference>
<dbReference type="RefSeq" id="WP_011174966.1">
    <property type="nucleotide sequence ID" value="NC_005861.2"/>
</dbReference>
<dbReference type="SMR" id="Q6ME59"/>
<dbReference type="STRING" id="264201.pc0416"/>
<dbReference type="KEGG" id="pcu:PC_RS02030"/>
<dbReference type="eggNOG" id="COG0185">
    <property type="taxonomic scope" value="Bacteria"/>
</dbReference>
<dbReference type="HOGENOM" id="CLU_144911_0_1_0"/>
<dbReference type="OrthoDB" id="9797833at2"/>
<dbReference type="Proteomes" id="UP000000529">
    <property type="component" value="Chromosome"/>
</dbReference>
<dbReference type="GO" id="GO:0005737">
    <property type="term" value="C:cytoplasm"/>
    <property type="evidence" value="ECO:0007669"/>
    <property type="project" value="UniProtKB-ARBA"/>
</dbReference>
<dbReference type="GO" id="GO:0015935">
    <property type="term" value="C:small ribosomal subunit"/>
    <property type="evidence" value="ECO:0007669"/>
    <property type="project" value="InterPro"/>
</dbReference>
<dbReference type="GO" id="GO:0019843">
    <property type="term" value="F:rRNA binding"/>
    <property type="evidence" value="ECO:0007669"/>
    <property type="project" value="UniProtKB-UniRule"/>
</dbReference>
<dbReference type="GO" id="GO:0003735">
    <property type="term" value="F:structural constituent of ribosome"/>
    <property type="evidence" value="ECO:0007669"/>
    <property type="project" value="InterPro"/>
</dbReference>
<dbReference type="GO" id="GO:0000028">
    <property type="term" value="P:ribosomal small subunit assembly"/>
    <property type="evidence" value="ECO:0007669"/>
    <property type="project" value="TreeGrafter"/>
</dbReference>
<dbReference type="GO" id="GO:0006412">
    <property type="term" value="P:translation"/>
    <property type="evidence" value="ECO:0007669"/>
    <property type="project" value="UniProtKB-UniRule"/>
</dbReference>
<dbReference type="FunFam" id="3.30.860.10:FF:000001">
    <property type="entry name" value="30S ribosomal protein S19"/>
    <property type="match status" value="1"/>
</dbReference>
<dbReference type="Gene3D" id="3.30.860.10">
    <property type="entry name" value="30s Ribosomal Protein S19, Chain A"/>
    <property type="match status" value="1"/>
</dbReference>
<dbReference type="HAMAP" id="MF_00531">
    <property type="entry name" value="Ribosomal_uS19"/>
    <property type="match status" value="1"/>
</dbReference>
<dbReference type="InterPro" id="IPR002222">
    <property type="entry name" value="Ribosomal_uS19"/>
</dbReference>
<dbReference type="InterPro" id="IPR005732">
    <property type="entry name" value="Ribosomal_uS19_bac-type"/>
</dbReference>
<dbReference type="InterPro" id="IPR020934">
    <property type="entry name" value="Ribosomal_uS19_CS"/>
</dbReference>
<dbReference type="InterPro" id="IPR023575">
    <property type="entry name" value="Ribosomal_uS19_SF"/>
</dbReference>
<dbReference type="NCBIfam" id="TIGR01050">
    <property type="entry name" value="rpsS_bact"/>
    <property type="match status" value="1"/>
</dbReference>
<dbReference type="PANTHER" id="PTHR11880">
    <property type="entry name" value="RIBOSOMAL PROTEIN S19P FAMILY MEMBER"/>
    <property type="match status" value="1"/>
</dbReference>
<dbReference type="PANTHER" id="PTHR11880:SF8">
    <property type="entry name" value="SMALL RIBOSOMAL SUBUNIT PROTEIN US19M"/>
    <property type="match status" value="1"/>
</dbReference>
<dbReference type="Pfam" id="PF00203">
    <property type="entry name" value="Ribosomal_S19"/>
    <property type="match status" value="1"/>
</dbReference>
<dbReference type="PIRSF" id="PIRSF002144">
    <property type="entry name" value="Ribosomal_S19"/>
    <property type="match status" value="1"/>
</dbReference>
<dbReference type="PRINTS" id="PR00975">
    <property type="entry name" value="RIBOSOMALS19"/>
</dbReference>
<dbReference type="SUPFAM" id="SSF54570">
    <property type="entry name" value="Ribosomal protein S19"/>
    <property type="match status" value="1"/>
</dbReference>
<dbReference type="PROSITE" id="PS00323">
    <property type="entry name" value="RIBOSOMAL_S19"/>
    <property type="match status" value="1"/>
</dbReference>
<feature type="chain" id="PRO_0000129870" description="Small ribosomal subunit protein uS19">
    <location>
        <begin position="1"/>
        <end position="87"/>
    </location>
</feature>
<feature type="region of interest" description="Disordered" evidence="2">
    <location>
        <begin position="1"/>
        <end position="29"/>
    </location>
</feature>
<feature type="compositionally biased region" description="Basic and acidic residues" evidence="2">
    <location>
        <begin position="9"/>
        <end position="28"/>
    </location>
</feature>
<sequence length="87" mass="10045">MARSLKKGPFVDHHLQKKVDVQNKEGTKKPIKTWSRRSMITPDMVGHTFEVHNGRKHLTVFVTDNMVGHRLGEFSPTRTFKGHPIKK</sequence>
<evidence type="ECO:0000255" key="1">
    <source>
        <dbReference type="HAMAP-Rule" id="MF_00531"/>
    </source>
</evidence>
<evidence type="ECO:0000256" key="2">
    <source>
        <dbReference type="SAM" id="MobiDB-lite"/>
    </source>
</evidence>
<evidence type="ECO:0000305" key="3"/>
<protein>
    <recommendedName>
        <fullName evidence="1">Small ribosomal subunit protein uS19</fullName>
    </recommendedName>
    <alternativeName>
        <fullName evidence="3">30S ribosomal protein S19</fullName>
    </alternativeName>
</protein>
<name>RS19_PARUW</name>
<comment type="function">
    <text evidence="1">Protein S19 forms a complex with S13 that binds strongly to the 16S ribosomal RNA.</text>
</comment>
<comment type="similarity">
    <text evidence="1">Belongs to the universal ribosomal protein uS19 family.</text>
</comment>
<organism>
    <name type="scientific">Protochlamydia amoebophila (strain UWE25)</name>
    <dbReference type="NCBI Taxonomy" id="264201"/>
    <lineage>
        <taxon>Bacteria</taxon>
        <taxon>Pseudomonadati</taxon>
        <taxon>Chlamydiota</taxon>
        <taxon>Chlamydiia</taxon>
        <taxon>Parachlamydiales</taxon>
        <taxon>Parachlamydiaceae</taxon>
        <taxon>Candidatus Protochlamydia</taxon>
    </lineage>
</organism>
<gene>
    <name evidence="1" type="primary">rpsS</name>
    <name type="ordered locus">pc0416</name>
</gene>
<reference key="1">
    <citation type="journal article" date="2004" name="Science">
        <title>Illuminating the evolutionary history of chlamydiae.</title>
        <authorList>
            <person name="Horn M."/>
            <person name="Collingro A."/>
            <person name="Schmitz-Esser S."/>
            <person name="Beier C.L."/>
            <person name="Purkhold U."/>
            <person name="Fartmann B."/>
            <person name="Brandt P."/>
            <person name="Nyakatura G.J."/>
            <person name="Droege M."/>
            <person name="Frishman D."/>
            <person name="Rattei T."/>
            <person name="Mewes H.-W."/>
            <person name="Wagner M."/>
        </authorList>
    </citation>
    <scope>NUCLEOTIDE SEQUENCE [LARGE SCALE GENOMIC DNA]</scope>
    <source>
        <strain>UWE25</strain>
    </source>
</reference>
<accession>Q6ME59</accession>
<keyword id="KW-1185">Reference proteome</keyword>
<keyword id="KW-0687">Ribonucleoprotein</keyword>
<keyword id="KW-0689">Ribosomal protein</keyword>
<keyword id="KW-0694">RNA-binding</keyword>
<keyword id="KW-0699">rRNA-binding</keyword>